<proteinExistence type="inferred from homology"/>
<comment type="catalytic activity">
    <reaction evidence="1">
        <text>tRNA(Phe) + L-phenylalanine + ATP = L-phenylalanyl-tRNA(Phe) + AMP + diphosphate + H(+)</text>
        <dbReference type="Rhea" id="RHEA:19413"/>
        <dbReference type="Rhea" id="RHEA-COMP:9668"/>
        <dbReference type="Rhea" id="RHEA-COMP:9699"/>
        <dbReference type="ChEBI" id="CHEBI:15378"/>
        <dbReference type="ChEBI" id="CHEBI:30616"/>
        <dbReference type="ChEBI" id="CHEBI:33019"/>
        <dbReference type="ChEBI" id="CHEBI:58095"/>
        <dbReference type="ChEBI" id="CHEBI:78442"/>
        <dbReference type="ChEBI" id="CHEBI:78531"/>
        <dbReference type="ChEBI" id="CHEBI:456215"/>
        <dbReference type="EC" id="6.1.1.20"/>
    </reaction>
</comment>
<comment type="cofactor">
    <cofactor evidence="1">
        <name>Mg(2+)</name>
        <dbReference type="ChEBI" id="CHEBI:18420"/>
    </cofactor>
    <text evidence="1">Binds 2 magnesium ions per tetramer.</text>
</comment>
<comment type="subunit">
    <text evidence="1">Tetramer of two alpha and two beta subunits.</text>
</comment>
<comment type="subcellular location">
    <subcellularLocation>
        <location evidence="1">Cytoplasm</location>
    </subcellularLocation>
</comment>
<comment type="similarity">
    <text evidence="1">Belongs to the class-II aminoacyl-tRNA synthetase family. Phe-tRNA synthetase alpha subunit type 1 subfamily.</text>
</comment>
<organism>
    <name type="scientific">Anoxybacillus flavithermus (strain DSM 21510 / WK1)</name>
    <dbReference type="NCBI Taxonomy" id="491915"/>
    <lineage>
        <taxon>Bacteria</taxon>
        <taxon>Bacillati</taxon>
        <taxon>Bacillota</taxon>
        <taxon>Bacilli</taxon>
        <taxon>Bacillales</taxon>
        <taxon>Anoxybacillaceae</taxon>
        <taxon>Anoxybacillus</taxon>
    </lineage>
</organism>
<gene>
    <name evidence="1" type="primary">pheS</name>
    <name type="ordered locus">Aflv_0542</name>
</gene>
<protein>
    <recommendedName>
        <fullName evidence="1">Phenylalanine--tRNA ligase alpha subunit</fullName>
        <ecNumber evidence="1">6.1.1.20</ecNumber>
    </recommendedName>
    <alternativeName>
        <fullName evidence="1">Phenylalanyl-tRNA synthetase alpha subunit</fullName>
        <shortName evidence="1">PheRS</shortName>
    </alternativeName>
</protein>
<dbReference type="EC" id="6.1.1.20" evidence="1"/>
<dbReference type="EMBL" id="CP000922">
    <property type="protein sequence ID" value="ACJ32923.1"/>
    <property type="molecule type" value="Genomic_DNA"/>
</dbReference>
<dbReference type="RefSeq" id="WP_006323505.1">
    <property type="nucleotide sequence ID" value="NC_011567.1"/>
</dbReference>
<dbReference type="SMR" id="B7GGW8"/>
<dbReference type="STRING" id="491915.Aflv_0542"/>
<dbReference type="GeneID" id="7036798"/>
<dbReference type="KEGG" id="afl:Aflv_0542"/>
<dbReference type="eggNOG" id="COG0016">
    <property type="taxonomic scope" value="Bacteria"/>
</dbReference>
<dbReference type="HOGENOM" id="CLU_025086_0_1_9"/>
<dbReference type="Proteomes" id="UP000000742">
    <property type="component" value="Chromosome"/>
</dbReference>
<dbReference type="GO" id="GO:0005737">
    <property type="term" value="C:cytoplasm"/>
    <property type="evidence" value="ECO:0007669"/>
    <property type="project" value="UniProtKB-SubCell"/>
</dbReference>
<dbReference type="GO" id="GO:0005524">
    <property type="term" value="F:ATP binding"/>
    <property type="evidence" value="ECO:0007669"/>
    <property type="project" value="UniProtKB-UniRule"/>
</dbReference>
<dbReference type="GO" id="GO:0140096">
    <property type="term" value="F:catalytic activity, acting on a protein"/>
    <property type="evidence" value="ECO:0007669"/>
    <property type="project" value="UniProtKB-ARBA"/>
</dbReference>
<dbReference type="GO" id="GO:0000287">
    <property type="term" value="F:magnesium ion binding"/>
    <property type="evidence" value="ECO:0007669"/>
    <property type="project" value="UniProtKB-UniRule"/>
</dbReference>
<dbReference type="GO" id="GO:0004826">
    <property type="term" value="F:phenylalanine-tRNA ligase activity"/>
    <property type="evidence" value="ECO:0007669"/>
    <property type="project" value="UniProtKB-UniRule"/>
</dbReference>
<dbReference type="GO" id="GO:0016740">
    <property type="term" value="F:transferase activity"/>
    <property type="evidence" value="ECO:0007669"/>
    <property type="project" value="UniProtKB-ARBA"/>
</dbReference>
<dbReference type="GO" id="GO:0000049">
    <property type="term" value="F:tRNA binding"/>
    <property type="evidence" value="ECO:0007669"/>
    <property type="project" value="InterPro"/>
</dbReference>
<dbReference type="GO" id="GO:0006432">
    <property type="term" value="P:phenylalanyl-tRNA aminoacylation"/>
    <property type="evidence" value="ECO:0007669"/>
    <property type="project" value="UniProtKB-UniRule"/>
</dbReference>
<dbReference type="CDD" id="cd00496">
    <property type="entry name" value="PheRS_alpha_core"/>
    <property type="match status" value="1"/>
</dbReference>
<dbReference type="FunFam" id="3.30.930.10:FF:000003">
    <property type="entry name" value="Phenylalanine--tRNA ligase alpha subunit"/>
    <property type="match status" value="1"/>
</dbReference>
<dbReference type="Gene3D" id="3.30.930.10">
    <property type="entry name" value="Bira Bifunctional Protein, Domain 2"/>
    <property type="match status" value="1"/>
</dbReference>
<dbReference type="HAMAP" id="MF_00281">
    <property type="entry name" value="Phe_tRNA_synth_alpha1"/>
    <property type="match status" value="1"/>
</dbReference>
<dbReference type="InterPro" id="IPR006195">
    <property type="entry name" value="aa-tRNA-synth_II"/>
</dbReference>
<dbReference type="InterPro" id="IPR045864">
    <property type="entry name" value="aa-tRNA-synth_II/BPL/LPL"/>
</dbReference>
<dbReference type="InterPro" id="IPR004529">
    <property type="entry name" value="Phe-tRNA-synth_IIc_asu"/>
</dbReference>
<dbReference type="InterPro" id="IPR004188">
    <property type="entry name" value="Phe-tRNA_ligase_II_N"/>
</dbReference>
<dbReference type="InterPro" id="IPR022911">
    <property type="entry name" value="Phe_tRNA_ligase_alpha1_bac"/>
</dbReference>
<dbReference type="InterPro" id="IPR002319">
    <property type="entry name" value="Phenylalanyl-tRNA_Synthase"/>
</dbReference>
<dbReference type="InterPro" id="IPR010978">
    <property type="entry name" value="tRNA-bd_arm"/>
</dbReference>
<dbReference type="NCBIfam" id="TIGR00468">
    <property type="entry name" value="pheS"/>
    <property type="match status" value="1"/>
</dbReference>
<dbReference type="PANTHER" id="PTHR11538:SF41">
    <property type="entry name" value="PHENYLALANINE--TRNA LIGASE, MITOCHONDRIAL"/>
    <property type="match status" value="1"/>
</dbReference>
<dbReference type="PANTHER" id="PTHR11538">
    <property type="entry name" value="PHENYLALANYL-TRNA SYNTHETASE"/>
    <property type="match status" value="1"/>
</dbReference>
<dbReference type="Pfam" id="PF02912">
    <property type="entry name" value="Phe_tRNA-synt_N"/>
    <property type="match status" value="1"/>
</dbReference>
<dbReference type="Pfam" id="PF01409">
    <property type="entry name" value="tRNA-synt_2d"/>
    <property type="match status" value="1"/>
</dbReference>
<dbReference type="SUPFAM" id="SSF55681">
    <property type="entry name" value="Class II aaRS and biotin synthetases"/>
    <property type="match status" value="1"/>
</dbReference>
<dbReference type="SUPFAM" id="SSF46589">
    <property type="entry name" value="tRNA-binding arm"/>
    <property type="match status" value="1"/>
</dbReference>
<dbReference type="PROSITE" id="PS50862">
    <property type="entry name" value="AA_TRNA_LIGASE_II"/>
    <property type="match status" value="1"/>
</dbReference>
<evidence type="ECO:0000255" key="1">
    <source>
        <dbReference type="HAMAP-Rule" id="MF_00281"/>
    </source>
</evidence>
<sequence>MKERLQQLQQEALEKIEQANDLKALNDVRVAYLGKKGPITEVLRGMGALSPEERPIMGALVNDVREAIQQALEAKQATLEQAEVEKKLAAEAIDVTLPGRPIRRGNHHPLTRVIEEIEDLFIGMGYTIAEGPEVEQDYYNFEALNLPKGHPARDMQDSFYITEEILLRTHTSPVQARTMEKHQGRGPVKIICPGKVYRRDNDDATHSHQFTQIEGLVVDENIRMSDLKGTLREFARKMFGEDRDIRFRPSFFPFTEPSVEVDVSCFNCGGHGCNVCKGTGWIEILGAGMVHPNVLEMAGFDSKKYTGFAFGMGPERIAMLKYGIDDIRHFYQNDLRFLQQFNRV</sequence>
<accession>B7GGW8</accession>
<name>SYFA_ANOFW</name>
<keyword id="KW-0030">Aminoacyl-tRNA synthetase</keyword>
<keyword id="KW-0067">ATP-binding</keyword>
<keyword id="KW-0963">Cytoplasm</keyword>
<keyword id="KW-0436">Ligase</keyword>
<keyword id="KW-0460">Magnesium</keyword>
<keyword id="KW-0479">Metal-binding</keyword>
<keyword id="KW-0547">Nucleotide-binding</keyword>
<keyword id="KW-0648">Protein biosynthesis</keyword>
<feature type="chain" id="PRO_1000119385" description="Phenylalanine--tRNA ligase alpha subunit">
    <location>
        <begin position="1"/>
        <end position="344"/>
    </location>
</feature>
<feature type="binding site" evidence="1">
    <location>
        <position position="256"/>
    </location>
    <ligand>
        <name>Mg(2+)</name>
        <dbReference type="ChEBI" id="CHEBI:18420"/>
        <note>shared with beta subunit</note>
    </ligand>
</feature>
<reference key="1">
    <citation type="journal article" date="2008" name="Genome Biol.">
        <title>Encapsulated in silica: genome, proteome and physiology of the thermophilic bacterium Anoxybacillus flavithermus WK1.</title>
        <authorList>
            <person name="Saw J.H."/>
            <person name="Mountain B.W."/>
            <person name="Feng L."/>
            <person name="Omelchenko M.V."/>
            <person name="Hou S."/>
            <person name="Saito J.A."/>
            <person name="Stott M.B."/>
            <person name="Li D."/>
            <person name="Zhao G."/>
            <person name="Wu J."/>
            <person name="Galperin M.Y."/>
            <person name="Koonin E.V."/>
            <person name="Makarova K.S."/>
            <person name="Wolf Y.I."/>
            <person name="Rigden D.J."/>
            <person name="Dunfield P.F."/>
            <person name="Wang L."/>
            <person name="Alam M."/>
        </authorList>
    </citation>
    <scope>NUCLEOTIDE SEQUENCE [LARGE SCALE GENOMIC DNA]</scope>
    <source>
        <strain>DSM 21510 / WK1</strain>
    </source>
</reference>